<keyword id="KW-1003">Cell membrane</keyword>
<keyword id="KW-0472">Membrane</keyword>
<keyword id="KW-0534">Nitrate assimilation</keyword>
<keyword id="KW-1185">Reference proteome</keyword>
<keyword id="KW-0732">Signal</keyword>
<keyword id="KW-0812">Transmembrane</keyword>
<keyword id="KW-1133">Transmembrane helix</keyword>
<organism>
    <name type="scientific">Oryza sativa subsp. japonica</name>
    <name type="common">Rice</name>
    <dbReference type="NCBI Taxonomy" id="39947"/>
    <lineage>
        <taxon>Eukaryota</taxon>
        <taxon>Viridiplantae</taxon>
        <taxon>Streptophyta</taxon>
        <taxon>Embryophyta</taxon>
        <taxon>Tracheophyta</taxon>
        <taxon>Spermatophyta</taxon>
        <taxon>Magnoliopsida</taxon>
        <taxon>Liliopsida</taxon>
        <taxon>Poales</taxon>
        <taxon>Poaceae</taxon>
        <taxon>BOP clade</taxon>
        <taxon>Oryzoideae</taxon>
        <taxon>Oryzeae</taxon>
        <taxon>Oryzinae</taxon>
        <taxon>Oryza</taxon>
        <taxon>Oryza sativa</taxon>
    </lineage>
</organism>
<feature type="signal peptide" evidence="2">
    <location>
        <begin position="1"/>
        <end position="23"/>
    </location>
</feature>
<feature type="chain" id="PRO_0000430009" description="Probable high-affinity nitrate transporter-activating protein 2.2">
    <location>
        <begin position="24"/>
        <end position="210"/>
    </location>
</feature>
<feature type="transmembrane region" description="Helical" evidence="2">
    <location>
        <begin position="182"/>
        <end position="202"/>
    </location>
</feature>
<dbReference type="EMBL" id="AL606595">
    <property type="protein sequence ID" value="CAE05891.1"/>
    <property type="molecule type" value="Genomic_DNA"/>
</dbReference>
<dbReference type="EMBL" id="AP008210">
    <property type="protein sequence ID" value="BAF15013.1"/>
    <property type="molecule type" value="Genomic_DNA"/>
</dbReference>
<dbReference type="EMBL" id="AP014960">
    <property type="protein sequence ID" value="BAS89729.1"/>
    <property type="molecule type" value="Genomic_DNA"/>
</dbReference>
<dbReference type="EMBL" id="AK109571">
    <property type="protein sequence ID" value="BAG98803.1"/>
    <property type="molecule type" value="mRNA"/>
</dbReference>
<dbReference type="RefSeq" id="XP_015634457.1">
    <property type="nucleotide sequence ID" value="XM_015778971.1"/>
</dbReference>
<dbReference type="FunCoup" id="Q7XK12">
    <property type="interactions" value="589"/>
</dbReference>
<dbReference type="STRING" id="39947.Q7XK12"/>
<dbReference type="PaxDb" id="39947-Q7XK12"/>
<dbReference type="EnsemblPlants" id="Os04t0480200-01">
    <property type="protein sequence ID" value="Os04t0480200-01"/>
    <property type="gene ID" value="Os04g0480200"/>
</dbReference>
<dbReference type="Gramene" id="Os04t0480200-01">
    <property type="protein sequence ID" value="Os04t0480200-01"/>
    <property type="gene ID" value="Os04g0480200"/>
</dbReference>
<dbReference type="KEGG" id="dosa:Os04g0480200"/>
<dbReference type="eggNOG" id="ENOG502RXTZ">
    <property type="taxonomic scope" value="Eukaryota"/>
</dbReference>
<dbReference type="HOGENOM" id="CLU_093989_0_0_1"/>
<dbReference type="InParanoid" id="Q7XK12"/>
<dbReference type="OMA" id="ACQFEIA"/>
<dbReference type="OrthoDB" id="2015470at2759"/>
<dbReference type="Proteomes" id="UP000000763">
    <property type="component" value="Chromosome 4"/>
</dbReference>
<dbReference type="Proteomes" id="UP000059680">
    <property type="component" value="Chromosome 4"/>
</dbReference>
<dbReference type="GO" id="GO:0005886">
    <property type="term" value="C:plasma membrane"/>
    <property type="evidence" value="ECO:0007669"/>
    <property type="project" value="UniProtKB-SubCell"/>
</dbReference>
<dbReference type="GO" id="GO:0015112">
    <property type="term" value="F:nitrate transmembrane transporter activity"/>
    <property type="evidence" value="ECO:0000318"/>
    <property type="project" value="GO_Central"/>
</dbReference>
<dbReference type="GO" id="GO:0042128">
    <property type="term" value="P:nitrate assimilation"/>
    <property type="evidence" value="ECO:0007669"/>
    <property type="project" value="UniProtKB-KW"/>
</dbReference>
<dbReference type="GO" id="GO:0010167">
    <property type="term" value="P:response to nitrate"/>
    <property type="evidence" value="ECO:0000318"/>
    <property type="project" value="GO_Central"/>
</dbReference>
<dbReference type="InterPro" id="IPR016605">
    <property type="entry name" value="Transptr_NO3_Nar2"/>
</dbReference>
<dbReference type="PANTHER" id="PTHR34806">
    <property type="entry name" value="HIGH-AFFINITY NITRATE TRANSPORTER 3.2"/>
    <property type="match status" value="1"/>
</dbReference>
<dbReference type="PANTHER" id="PTHR34806:SF4">
    <property type="entry name" value="HIGH-AFFINITY NITRATE TRANSPORTER-ACTIVATING PROTEIN 2.2-RELATED"/>
    <property type="match status" value="1"/>
</dbReference>
<dbReference type="Pfam" id="PF16974">
    <property type="entry name" value="NAR2"/>
    <property type="match status" value="1"/>
</dbReference>
<dbReference type="PIRSF" id="PIRSF012939">
    <property type="entry name" value="Transpt_NO3_Nar2"/>
    <property type="match status" value="1"/>
</dbReference>
<reference key="1">
    <citation type="journal article" date="2002" name="Nature">
        <title>Sequence and analysis of rice chromosome 4.</title>
        <authorList>
            <person name="Feng Q."/>
            <person name="Zhang Y."/>
            <person name="Hao P."/>
            <person name="Wang S."/>
            <person name="Fu G."/>
            <person name="Huang Y."/>
            <person name="Li Y."/>
            <person name="Zhu J."/>
            <person name="Liu Y."/>
            <person name="Hu X."/>
            <person name="Jia P."/>
            <person name="Zhang Y."/>
            <person name="Zhao Q."/>
            <person name="Ying K."/>
            <person name="Yu S."/>
            <person name="Tang Y."/>
            <person name="Weng Q."/>
            <person name="Zhang L."/>
            <person name="Lu Y."/>
            <person name="Mu J."/>
            <person name="Lu Y."/>
            <person name="Zhang L.S."/>
            <person name="Yu Z."/>
            <person name="Fan D."/>
            <person name="Liu X."/>
            <person name="Lu T."/>
            <person name="Li C."/>
            <person name="Wu Y."/>
            <person name="Sun T."/>
            <person name="Lei H."/>
            <person name="Li T."/>
            <person name="Hu H."/>
            <person name="Guan J."/>
            <person name="Wu M."/>
            <person name="Zhang R."/>
            <person name="Zhou B."/>
            <person name="Chen Z."/>
            <person name="Chen L."/>
            <person name="Jin Z."/>
            <person name="Wang R."/>
            <person name="Yin H."/>
            <person name="Cai Z."/>
            <person name="Ren S."/>
            <person name="Lv G."/>
            <person name="Gu W."/>
            <person name="Zhu G."/>
            <person name="Tu Y."/>
            <person name="Jia J."/>
            <person name="Zhang Y."/>
            <person name="Chen J."/>
            <person name="Kang H."/>
            <person name="Chen X."/>
            <person name="Shao C."/>
            <person name="Sun Y."/>
            <person name="Hu Q."/>
            <person name="Zhang X."/>
            <person name="Zhang W."/>
            <person name="Wang L."/>
            <person name="Ding C."/>
            <person name="Sheng H."/>
            <person name="Gu J."/>
            <person name="Chen S."/>
            <person name="Ni L."/>
            <person name="Zhu F."/>
            <person name="Chen W."/>
            <person name="Lan L."/>
            <person name="Lai Y."/>
            <person name="Cheng Z."/>
            <person name="Gu M."/>
            <person name="Jiang J."/>
            <person name="Li J."/>
            <person name="Hong G."/>
            <person name="Xue Y."/>
            <person name="Han B."/>
        </authorList>
    </citation>
    <scope>NUCLEOTIDE SEQUENCE [LARGE SCALE GENOMIC DNA]</scope>
    <source>
        <strain>cv. Nipponbare</strain>
    </source>
</reference>
<reference key="2">
    <citation type="journal article" date="2005" name="Nature">
        <title>The map-based sequence of the rice genome.</title>
        <authorList>
            <consortium name="International rice genome sequencing project (IRGSP)"/>
        </authorList>
    </citation>
    <scope>NUCLEOTIDE SEQUENCE [LARGE SCALE GENOMIC DNA]</scope>
    <source>
        <strain>cv. Nipponbare</strain>
    </source>
</reference>
<reference key="3">
    <citation type="journal article" date="2008" name="Nucleic Acids Res.">
        <title>The rice annotation project database (RAP-DB): 2008 update.</title>
        <authorList>
            <consortium name="The rice annotation project (RAP)"/>
        </authorList>
    </citation>
    <scope>GENOME REANNOTATION</scope>
    <source>
        <strain>cv. Nipponbare</strain>
    </source>
</reference>
<reference key="4">
    <citation type="journal article" date="2013" name="Rice">
        <title>Improvement of the Oryza sativa Nipponbare reference genome using next generation sequence and optical map data.</title>
        <authorList>
            <person name="Kawahara Y."/>
            <person name="de la Bastide M."/>
            <person name="Hamilton J.P."/>
            <person name="Kanamori H."/>
            <person name="McCombie W.R."/>
            <person name="Ouyang S."/>
            <person name="Schwartz D.C."/>
            <person name="Tanaka T."/>
            <person name="Wu J."/>
            <person name="Zhou S."/>
            <person name="Childs K.L."/>
            <person name="Davidson R.M."/>
            <person name="Lin H."/>
            <person name="Quesada-Ocampo L."/>
            <person name="Vaillancourt B."/>
            <person name="Sakai H."/>
            <person name="Lee S.S."/>
            <person name="Kim J."/>
            <person name="Numa H."/>
            <person name="Itoh T."/>
            <person name="Buell C.R."/>
            <person name="Matsumoto T."/>
        </authorList>
    </citation>
    <scope>GENOME REANNOTATION</scope>
    <source>
        <strain>cv. Nipponbare</strain>
    </source>
</reference>
<reference key="5">
    <citation type="journal article" date="2003" name="Science">
        <title>Collection, mapping, and annotation of over 28,000 cDNA clones from japonica rice.</title>
        <authorList>
            <consortium name="The rice full-length cDNA consortium"/>
        </authorList>
    </citation>
    <scope>NUCLEOTIDE SEQUENCE [LARGE SCALE MRNA]</scope>
    <source>
        <strain>cv. Nipponbare</strain>
    </source>
</reference>
<reference key="6">
    <citation type="journal article" date="2011" name="J. Exp. Bot.">
        <title>Spatial expression and regulation of rice high-affinity nitrate transporters by nitrogen and carbon status.</title>
        <authorList>
            <person name="Feng H."/>
            <person name="Yan M."/>
            <person name="Fan X."/>
            <person name="Li B."/>
            <person name="Shen Q."/>
            <person name="Miller A.J."/>
            <person name="Xu G."/>
        </authorList>
    </citation>
    <scope>LACK OF INDUCTION BY NITRATE</scope>
</reference>
<name>NAR22_ORYSJ</name>
<protein>
    <recommendedName>
        <fullName>Probable high-affinity nitrate transporter-activating protein 2.2</fullName>
        <shortName>OsNAR2.2</shortName>
    </recommendedName>
</protein>
<accession>Q7XK12</accession>
<accession>A0A0N7KJ87</accession>
<gene>
    <name type="primary">NAR2.2</name>
    <name type="ordered locus">Os04g0480200</name>
    <name type="ordered locus">LOC_Os04g40410</name>
    <name type="ORF">OSJNBa0044K18.32</name>
</gene>
<proteinExistence type="evidence at transcript level"/>
<comment type="function">
    <text evidence="1">Involved in nitrate transport.</text>
</comment>
<comment type="subcellular location">
    <subcellularLocation>
        <location evidence="3">Cell membrane</location>
        <topology evidence="3">Single-pass membrane protein</topology>
    </subcellularLocation>
</comment>
<comment type="induction">
    <text>Not induced by nitrate in roots.</text>
</comment>
<comment type="similarity">
    <text evidence="3">Belongs to the NAR2 family.</text>
</comment>
<sequence length="210" mass="21536">MARFGAVIHRVFLPLLLLLVVLGACHVTPAAAAAGARLSALAKALVVEASPRAGQVLHAGEDAITVTWSLNATAAAAAAGADAGYKAVKVTLCYAPASQVGRGWRKAHDDLSKDKACQFKIAQQPYDGAGKFEYTVARDVPTASYYVRAYALDASGARVAYGETAPSASFAVAGITGVTASIEVAAGVLSAFSVAALAVFLVLENKKKNK</sequence>
<evidence type="ECO:0000250" key="1"/>
<evidence type="ECO:0000255" key="2"/>
<evidence type="ECO:0000305" key="3"/>